<gene>
    <name type="primary">mt:ND6</name>
    <name type="synonym">ND6</name>
</gene>
<dbReference type="EC" id="7.1.1.2"/>
<dbReference type="EMBL" id="M37275">
    <property type="protein sequence ID" value="AAA69713.1"/>
    <property type="molecule type" value="Genomic_DNA"/>
</dbReference>
<dbReference type="EMBL" id="AF200828">
    <property type="protein sequence ID" value="AAF77236.1"/>
    <property type="molecule type" value="Genomic_DNA"/>
</dbReference>
<dbReference type="EMBL" id="AF200829">
    <property type="protein sequence ID" value="AAF77248.1"/>
    <property type="molecule type" value="Genomic_DNA"/>
</dbReference>
<dbReference type="EMBL" id="AJ400907">
    <property type="protein sequence ID" value="CAB91061.1"/>
    <property type="molecule type" value="Genomic_DNA"/>
</dbReference>
<dbReference type="EMBL" id="U37541">
    <property type="protein sequence ID" value="AAC47821.1"/>
    <property type="molecule type" value="Genomic_DNA"/>
</dbReference>
<dbReference type="EMBL" id="KJ947872">
    <property type="protein sequence ID" value="AIC64014.1"/>
    <property type="molecule type" value="Genomic_DNA"/>
</dbReference>
<dbReference type="PIR" id="S01189">
    <property type="entry name" value="S01189"/>
</dbReference>
<dbReference type="RefSeq" id="YP_009047276.1">
    <property type="nucleotide sequence ID" value="NC_024511.2"/>
</dbReference>
<dbReference type="PDB" id="8B9Z">
    <property type="method" value="EM"/>
    <property type="resolution" value="3.28 A"/>
    <property type="chains" value="J=1-173"/>
</dbReference>
<dbReference type="PDB" id="8BA0">
    <property type="method" value="EM"/>
    <property type="resolution" value="3.68 A"/>
    <property type="chains" value="J=1-167"/>
</dbReference>
<dbReference type="PDB" id="8ESW">
    <property type="method" value="EM"/>
    <property type="resolution" value="3.30 A"/>
    <property type="chains" value="6=1-174"/>
</dbReference>
<dbReference type="PDB" id="8ESZ">
    <property type="method" value="EM"/>
    <property type="resolution" value="3.40 A"/>
    <property type="chains" value="6=1-174"/>
</dbReference>
<dbReference type="PDBsum" id="8B9Z"/>
<dbReference type="PDBsum" id="8BA0"/>
<dbReference type="PDBsum" id="8ESW"/>
<dbReference type="PDBsum" id="8ESZ"/>
<dbReference type="EMDB" id="EMD-15936"/>
<dbReference type="EMDB" id="EMD-15937"/>
<dbReference type="EMDB" id="EMD-28581"/>
<dbReference type="EMDB" id="EMD-28582"/>
<dbReference type="SMR" id="P18933"/>
<dbReference type="ComplexPortal" id="CPX-8628">
    <property type="entry name" value="Mitochondrial respiratory chain complex I"/>
</dbReference>
<dbReference type="ComplexPortal" id="CPX-8638">
    <property type="entry name" value="Mitochondrial respiratory chain complex I, testis-specific variant"/>
</dbReference>
<dbReference type="FunCoup" id="P18933">
    <property type="interactions" value="146"/>
</dbReference>
<dbReference type="STRING" id="7227.FBpp0100185"/>
<dbReference type="PaxDb" id="7227-FBpp0100185"/>
<dbReference type="EnsemblMetazoa" id="FBtr0100883">
    <property type="protein sequence ID" value="FBpp0100185"/>
    <property type="gene ID" value="FBgn0013685"/>
</dbReference>
<dbReference type="GeneID" id="19893555"/>
<dbReference type="KEGG" id="dme:Dmel_CG34089"/>
<dbReference type="AGR" id="FB:FBgn0013685"/>
<dbReference type="CTD" id="4541"/>
<dbReference type="FlyBase" id="FBgn0013685">
    <property type="gene designation" value="mt:ND6"/>
</dbReference>
<dbReference type="VEuPathDB" id="VectorBase:FBgn0013685"/>
<dbReference type="eggNOG" id="ENOG502TCTS">
    <property type="taxonomic scope" value="Eukaryota"/>
</dbReference>
<dbReference type="HOGENOM" id="CLU_1548873_0_0_1"/>
<dbReference type="InParanoid" id="P18933"/>
<dbReference type="OMA" id="WFSYVLF"/>
<dbReference type="OrthoDB" id="6377199at2759"/>
<dbReference type="Reactome" id="R-DME-611105">
    <property type="pathway name" value="Respiratory electron transport"/>
</dbReference>
<dbReference type="Reactome" id="R-DME-6799198">
    <property type="pathway name" value="Complex I biogenesis"/>
</dbReference>
<dbReference type="GenomeRNAi" id="19893555"/>
<dbReference type="PRO" id="PR:P18933"/>
<dbReference type="Proteomes" id="UP000000803">
    <property type="component" value="Mitochondrion"/>
</dbReference>
<dbReference type="Bgee" id="FBgn0013685">
    <property type="expression patterns" value="Expressed in adult class III enteroendocrine cell in adult midgut (Drosophila) and 199 other cell types or tissues"/>
</dbReference>
<dbReference type="ExpressionAtlas" id="P18933">
    <property type="expression patterns" value="baseline and differential"/>
</dbReference>
<dbReference type="GO" id="GO:0005743">
    <property type="term" value="C:mitochondrial inner membrane"/>
    <property type="evidence" value="ECO:0000305"/>
    <property type="project" value="FlyBase"/>
</dbReference>
<dbReference type="GO" id="GO:0005739">
    <property type="term" value="C:mitochondrion"/>
    <property type="evidence" value="ECO:0000318"/>
    <property type="project" value="GO_Central"/>
</dbReference>
<dbReference type="GO" id="GO:0045271">
    <property type="term" value="C:respiratory chain complex I"/>
    <property type="evidence" value="ECO:0000314"/>
    <property type="project" value="FlyBase"/>
</dbReference>
<dbReference type="GO" id="GO:0008137">
    <property type="term" value="F:NADH dehydrogenase (ubiquinone) activity"/>
    <property type="evidence" value="ECO:0007669"/>
    <property type="project" value="UniProtKB-EC"/>
</dbReference>
<dbReference type="GO" id="GO:0006120">
    <property type="term" value="P:mitochondrial electron transport, NADH to ubiquinone"/>
    <property type="evidence" value="ECO:0000305"/>
    <property type="project" value="FlyBase"/>
</dbReference>
<dbReference type="InterPro" id="IPR050269">
    <property type="entry name" value="ComplexI_Subunit6"/>
</dbReference>
<dbReference type="InterPro" id="IPR001457">
    <property type="entry name" value="NADH_UbQ/plastoQ_OxRdtase_su6"/>
</dbReference>
<dbReference type="PANTHER" id="PTHR11435">
    <property type="entry name" value="NADH UBIQUINONE OXIDOREDUCTASE SUBUNIT ND6"/>
    <property type="match status" value="1"/>
</dbReference>
<dbReference type="PANTHER" id="PTHR11435:SF1">
    <property type="entry name" value="NADH-UBIQUINONE OXIDOREDUCTASE CHAIN 6"/>
    <property type="match status" value="1"/>
</dbReference>
<dbReference type="Pfam" id="PF00499">
    <property type="entry name" value="Oxidored_q3"/>
    <property type="match status" value="1"/>
</dbReference>
<protein>
    <recommendedName>
        <fullName>NADH-ubiquinone oxidoreductase chain 6</fullName>
        <ecNumber>7.1.1.2</ecNumber>
    </recommendedName>
    <alternativeName>
        <fullName>NADH dehydrogenase subunit 6</fullName>
    </alternativeName>
</protein>
<reference key="1">
    <citation type="journal article" date="1988" name="Genetics">
        <title>Drosophila melanogaster mitochondrial DNA: gene organization and evolutionary considerations.</title>
        <authorList>
            <person name="Garesse R."/>
        </authorList>
    </citation>
    <scope>NUCLEOTIDE SEQUENCE [GENOMIC DNA]</scope>
    <source>
        <strain>Bretagne</strain>
    </source>
</reference>
<reference key="2">
    <citation type="journal article" date="2000" name="J. Mol. Evol.">
        <title>Comparative genomics of mitochondrial DNA in members of the Drosophila melanogaster subgroup.</title>
        <authorList>
            <person name="Ballard J.W.O."/>
        </authorList>
    </citation>
    <scope>NUCLEOTIDE SEQUENCE [GENOMIC DNA]</scope>
    <source>
        <strain>Oregon-R</strain>
        <strain>Zimbabwe 53</strain>
    </source>
</reference>
<reference key="3">
    <citation type="journal article" date="2001" name="Heredity">
        <title>I-R system of hybrid dysgenesis in Drosophila melanogaster: analysis of the mitochondrial DNA in reactive strains exhibiting different potentials for I factor transposition.</title>
        <authorList>
            <person name="Azou Y."/>
            <person name="Bregliano J.C."/>
        </authorList>
    </citation>
    <scope>NUCLEOTIDE SEQUENCE [GENOMIC DNA]</scope>
    <source>
        <strain>Paris</strain>
    </source>
</reference>
<reference key="4">
    <citation type="journal article" date="1995" name="Insect Mol. Biol.">
        <title>Drosophila melanogaster mitochondrial DNA: completion of the nucleotide sequence and evolutionary comparisons.</title>
        <authorList>
            <person name="Lewis D.L."/>
            <person name="Farr C.L."/>
            <person name="Kaguni L.S."/>
        </authorList>
    </citation>
    <scope>NUCLEOTIDE SEQUENCE [LARGE SCALE GENOMIC DNA]</scope>
</reference>
<reference key="5">
    <citation type="submission" date="2014-08" db="EMBL/GenBank/DDBJ databases">
        <authorList>
            <person name="Wan K."/>
            <person name="Celniker S."/>
        </authorList>
    </citation>
    <scope>NUCLEOTIDE SEQUENCE [LARGE SCALE GENOMIC DNA]</scope>
    <source>
        <strain>Berkeley</strain>
    </source>
</reference>
<geneLocation type="mitochondrion"/>
<evidence type="ECO:0000250" key="1"/>
<evidence type="ECO:0000255" key="2"/>
<evidence type="ECO:0000305" key="3"/>
<evidence type="ECO:0007829" key="4">
    <source>
        <dbReference type="PDB" id="8B9Z"/>
    </source>
</evidence>
<organism>
    <name type="scientific">Drosophila melanogaster</name>
    <name type="common">Fruit fly</name>
    <dbReference type="NCBI Taxonomy" id="7227"/>
    <lineage>
        <taxon>Eukaryota</taxon>
        <taxon>Metazoa</taxon>
        <taxon>Ecdysozoa</taxon>
        <taxon>Arthropoda</taxon>
        <taxon>Hexapoda</taxon>
        <taxon>Insecta</taxon>
        <taxon>Pterygota</taxon>
        <taxon>Neoptera</taxon>
        <taxon>Endopterygota</taxon>
        <taxon>Diptera</taxon>
        <taxon>Brachycera</taxon>
        <taxon>Muscomorpha</taxon>
        <taxon>Ephydroidea</taxon>
        <taxon>Drosophilidae</taxon>
        <taxon>Drosophila</taxon>
        <taxon>Sophophora</taxon>
    </lineage>
</organism>
<comment type="function">
    <text evidence="1">Core subunit of the mitochondrial membrane respiratory chain NADH dehydrogenase (Complex I) that is believed to belong to the minimal assembly required for catalysis. Complex I functions in the transfer of electrons from NADH to the respiratory chain. The immediate electron acceptor for the enzyme is believed to be ubiquinone (By similarity).</text>
</comment>
<comment type="catalytic activity">
    <reaction>
        <text>a ubiquinone + NADH + 5 H(+)(in) = a ubiquinol + NAD(+) + 4 H(+)(out)</text>
        <dbReference type="Rhea" id="RHEA:29091"/>
        <dbReference type="Rhea" id="RHEA-COMP:9565"/>
        <dbReference type="Rhea" id="RHEA-COMP:9566"/>
        <dbReference type="ChEBI" id="CHEBI:15378"/>
        <dbReference type="ChEBI" id="CHEBI:16389"/>
        <dbReference type="ChEBI" id="CHEBI:17976"/>
        <dbReference type="ChEBI" id="CHEBI:57540"/>
        <dbReference type="ChEBI" id="CHEBI:57945"/>
        <dbReference type="EC" id="7.1.1.2"/>
    </reaction>
</comment>
<comment type="subcellular location">
    <subcellularLocation>
        <location evidence="3">Mitochondrion membrane</location>
        <topology evidence="3">Multi-pass membrane protein</topology>
    </subcellularLocation>
</comment>
<comment type="similarity">
    <text evidence="3">Belongs to the complex I subunit 6 family.</text>
</comment>
<feature type="chain" id="PRO_0000118278" description="NADH-ubiquinone oxidoreductase chain 6">
    <location>
        <begin position="1"/>
        <end position="174"/>
    </location>
</feature>
<feature type="transmembrane region" description="Helical" evidence="2">
    <location>
        <begin position="24"/>
        <end position="44"/>
    </location>
</feature>
<feature type="transmembrane region" description="Helical" evidence="2">
    <location>
        <begin position="53"/>
        <end position="73"/>
    </location>
</feature>
<feature type="transmembrane region" description="Helical" evidence="2">
    <location>
        <begin position="82"/>
        <end position="102"/>
    </location>
</feature>
<feature type="transmembrane region" description="Helical" evidence="2">
    <location>
        <begin position="143"/>
        <end position="163"/>
    </location>
</feature>
<feature type="helix" evidence="4">
    <location>
        <begin position="2"/>
        <end position="17"/>
    </location>
</feature>
<feature type="helix" evidence="4">
    <location>
        <begin position="23"/>
        <end position="43"/>
    </location>
</feature>
<feature type="helix" evidence="4">
    <location>
        <begin position="49"/>
        <end position="72"/>
    </location>
</feature>
<feature type="helix" evidence="4">
    <location>
        <begin position="82"/>
        <end position="100"/>
    </location>
</feature>
<feature type="turn" evidence="4">
    <location>
        <begin position="104"/>
        <end position="106"/>
    </location>
</feature>
<feature type="turn" evidence="4">
    <location>
        <begin position="114"/>
        <end position="116"/>
    </location>
</feature>
<feature type="helix" evidence="4">
    <location>
        <begin position="122"/>
        <end position="125"/>
    </location>
</feature>
<feature type="turn" evidence="4">
    <location>
        <begin position="128"/>
        <end position="133"/>
    </location>
</feature>
<feature type="helix" evidence="4">
    <location>
        <begin position="134"/>
        <end position="137"/>
    </location>
</feature>
<feature type="turn" evidence="4">
    <location>
        <begin position="139"/>
        <end position="141"/>
    </location>
</feature>
<feature type="helix" evidence="4">
    <location>
        <begin position="142"/>
        <end position="163"/>
    </location>
</feature>
<feature type="helix" evidence="4">
    <location>
        <begin position="165"/>
        <end position="167"/>
    </location>
</feature>
<accession>P18933</accession>
<accession>Q7HM97</accession>
<proteinExistence type="evidence at protein level"/>
<keyword id="KW-0002">3D-structure</keyword>
<keyword id="KW-0249">Electron transport</keyword>
<keyword id="KW-0472">Membrane</keyword>
<keyword id="KW-0496">Mitochondrion</keyword>
<keyword id="KW-0520">NAD</keyword>
<keyword id="KW-1185">Reference proteome</keyword>
<keyword id="KW-0679">Respiratory chain</keyword>
<keyword id="KW-1278">Translocase</keyword>
<keyword id="KW-0812">Transmembrane</keyword>
<keyword id="KW-1133">Transmembrane helix</keyword>
<keyword id="KW-0813">Transport</keyword>
<keyword id="KW-0830">Ubiquinone</keyword>
<name>NU6M_DROME</name>
<sequence length="174" mass="20075">MIQLMLYSLIITTSIIFLNMIHPLALGLTLLIQTIFVCLLTGLMTKSFWYSYILFLIFLGGMLVLFIYVTSLASNEMFNLSMKLTLFSSLILIFMLILSFIMDKTSSSLFLMNNDMQSIINMNSYFMENSLSLNKLYNFPTNFITILLMNYLLITLIVIVKITKLFKGPIRMMS</sequence>